<comment type="function">
    <text evidence="1">Together with its co-chaperonin GroES, plays an essential role in assisting protein folding. The GroEL-GroES system forms a nano-cage that allows encapsulation of the non-native substrate proteins and provides a physical environment optimized to promote and accelerate protein folding.</text>
</comment>
<comment type="catalytic activity">
    <reaction evidence="1">
        <text>ATP + H2O + a folded polypeptide = ADP + phosphate + an unfolded polypeptide.</text>
        <dbReference type="EC" id="5.6.1.7"/>
    </reaction>
</comment>
<comment type="subunit">
    <text evidence="1">Forms a cylinder of 14 subunits composed of two heptameric rings stacked back-to-back. Interacts with the co-chaperonin GroES.</text>
</comment>
<comment type="subcellular location">
    <subcellularLocation>
        <location evidence="1">Cytoplasm</location>
    </subcellularLocation>
</comment>
<comment type="similarity">
    <text evidence="1">Belongs to the chaperonin (HSP60) family.</text>
</comment>
<sequence length="546" mass="57198">MAAKDVVFGDSARAKMVEGVNILANAVKVTLGPKGRNVVLERSFGGPTVTKDGVSVAKEIELKDKLQNMGAQMVKEVASKTSDNAGDGTTTATVLAQSIVREGMKYVASGMNPMDLKRGIDKAVFAAIEELRKISKPCTTNKEIAQVGAISANSDSSIGDRIAEAMDKVGKEGVITVEDGKSLQDELDVVEGMQFDRGYLSPYFINNPDKQVAVLENPFVLLHDKKVSNIRDLLPILEQVAKAGRPLLIIAEDVEGEALATLVVNNIRGILKTVAVKAPGFGDRRKAMLEDIAILTGGQVIAEETGLTLEKATLAELGQAKRIEVAKENTTIIDGAGEAANIEARVKQVRTQIEEATSDYDREKLQERVAKLAGGVAVIKVGAATEVEMKEKKARVEDALHATRAAVEEGIVAGGGVALIRARTAIAGLKGANADQDAGIKIVLRAMEEPLRQIVTNGGEEASVVVAAVAAGTGNYGYNAATGEYVDLVDAGVVDPTKVTRTALQNAASVAGLLLTTDAAVCELPKEDAPMAGGMPGGMGGMGMDM</sequence>
<reference key="1">
    <citation type="journal article" date="2006" name="Proc. Natl. Acad. Sci. U.S.A.">
        <title>Burkholderia xenovorans LB400 harbors a multi-replicon, 9.73-Mbp genome shaped for versatility.</title>
        <authorList>
            <person name="Chain P.S.G."/>
            <person name="Denef V.J."/>
            <person name="Konstantinidis K.T."/>
            <person name="Vergez L.M."/>
            <person name="Agullo L."/>
            <person name="Reyes V.L."/>
            <person name="Hauser L."/>
            <person name="Cordova M."/>
            <person name="Gomez L."/>
            <person name="Gonzalez M."/>
            <person name="Land M."/>
            <person name="Lao V."/>
            <person name="Larimer F."/>
            <person name="LiPuma J.J."/>
            <person name="Mahenthiralingam E."/>
            <person name="Malfatti S.A."/>
            <person name="Marx C.J."/>
            <person name="Parnell J.J."/>
            <person name="Ramette A."/>
            <person name="Richardson P."/>
            <person name="Seeger M."/>
            <person name="Smith D."/>
            <person name="Spilker T."/>
            <person name="Sul W.J."/>
            <person name="Tsoi T.V."/>
            <person name="Ulrich L.E."/>
            <person name="Zhulin I.B."/>
            <person name="Tiedje J.M."/>
        </authorList>
    </citation>
    <scope>NUCLEOTIDE SEQUENCE [LARGE SCALE GENOMIC DNA]</scope>
    <source>
        <strain>LB400</strain>
    </source>
</reference>
<proteinExistence type="inferred from homology"/>
<evidence type="ECO:0000255" key="1">
    <source>
        <dbReference type="HAMAP-Rule" id="MF_00600"/>
    </source>
</evidence>
<keyword id="KW-0067">ATP-binding</keyword>
<keyword id="KW-0143">Chaperone</keyword>
<keyword id="KW-0963">Cytoplasm</keyword>
<keyword id="KW-0413">Isomerase</keyword>
<keyword id="KW-0547">Nucleotide-binding</keyword>
<keyword id="KW-1185">Reference proteome</keyword>
<name>CH601_PARXL</name>
<protein>
    <recommendedName>
        <fullName evidence="1">Chaperonin GroEL 1</fullName>
        <ecNumber evidence="1">5.6.1.7</ecNumber>
    </recommendedName>
    <alternativeName>
        <fullName evidence="1">60 kDa chaperonin 1</fullName>
    </alternativeName>
    <alternativeName>
        <fullName evidence="1">Chaperonin-60 1</fullName>
        <shortName evidence="1">Cpn60 1</shortName>
    </alternativeName>
</protein>
<organism>
    <name type="scientific">Paraburkholderia xenovorans (strain LB400)</name>
    <dbReference type="NCBI Taxonomy" id="266265"/>
    <lineage>
        <taxon>Bacteria</taxon>
        <taxon>Pseudomonadati</taxon>
        <taxon>Pseudomonadota</taxon>
        <taxon>Betaproteobacteria</taxon>
        <taxon>Burkholderiales</taxon>
        <taxon>Burkholderiaceae</taxon>
        <taxon>Paraburkholderia</taxon>
    </lineage>
</organism>
<feature type="chain" id="PRO_0000256887" description="Chaperonin GroEL 1">
    <location>
        <begin position="1"/>
        <end position="546"/>
    </location>
</feature>
<feature type="binding site" evidence="1">
    <location>
        <begin position="30"/>
        <end position="33"/>
    </location>
    <ligand>
        <name>ATP</name>
        <dbReference type="ChEBI" id="CHEBI:30616"/>
    </ligand>
</feature>
<feature type="binding site" evidence="1">
    <location>
        <position position="51"/>
    </location>
    <ligand>
        <name>ATP</name>
        <dbReference type="ChEBI" id="CHEBI:30616"/>
    </ligand>
</feature>
<feature type="binding site" evidence="1">
    <location>
        <begin position="87"/>
        <end position="91"/>
    </location>
    <ligand>
        <name>ATP</name>
        <dbReference type="ChEBI" id="CHEBI:30616"/>
    </ligand>
</feature>
<feature type="binding site" evidence="1">
    <location>
        <position position="415"/>
    </location>
    <ligand>
        <name>ATP</name>
        <dbReference type="ChEBI" id="CHEBI:30616"/>
    </ligand>
</feature>
<feature type="binding site" evidence="1">
    <location>
        <begin position="479"/>
        <end position="481"/>
    </location>
    <ligand>
        <name>ATP</name>
        <dbReference type="ChEBI" id="CHEBI:30616"/>
    </ligand>
</feature>
<feature type="binding site" evidence="1">
    <location>
        <position position="495"/>
    </location>
    <ligand>
        <name>ATP</name>
        <dbReference type="ChEBI" id="CHEBI:30616"/>
    </ligand>
</feature>
<accession>Q144Q6</accession>
<gene>
    <name evidence="1" type="primary">groEL1</name>
    <name evidence="1" type="synonym">groL1</name>
    <name type="ordered locus">Bxeno_A0645</name>
    <name type="ORF">Bxe_A3815</name>
</gene>
<dbReference type="EC" id="5.6.1.7" evidence="1"/>
<dbReference type="EMBL" id="CP000270">
    <property type="protein sequence ID" value="ABE29183.1"/>
    <property type="molecule type" value="Genomic_DNA"/>
</dbReference>
<dbReference type="RefSeq" id="WP_007178995.1">
    <property type="nucleotide sequence ID" value="NC_007951.1"/>
</dbReference>
<dbReference type="SMR" id="Q144Q6"/>
<dbReference type="STRING" id="266265.Bxe_A3815"/>
<dbReference type="KEGG" id="bxb:DR64_1492"/>
<dbReference type="KEGG" id="bxe:Bxe_A3815"/>
<dbReference type="eggNOG" id="COG0459">
    <property type="taxonomic scope" value="Bacteria"/>
</dbReference>
<dbReference type="OrthoDB" id="9766614at2"/>
<dbReference type="Proteomes" id="UP000001817">
    <property type="component" value="Chromosome 1"/>
</dbReference>
<dbReference type="GO" id="GO:0005737">
    <property type="term" value="C:cytoplasm"/>
    <property type="evidence" value="ECO:0007669"/>
    <property type="project" value="UniProtKB-SubCell"/>
</dbReference>
<dbReference type="GO" id="GO:0005524">
    <property type="term" value="F:ATP binding"/>
    <property type="evidence" value="ECO:0007669"/>
    <property type="project" value="UniProtKB-UniRule"/>
</dbReference>
<dbReference type="GO" id="GO:0140662">
    <property type="term" value="F:ATP-dependent protein folding chaperone"/>
    <property type="evidence" value="ECO:0007669"/>
    <property type="project" value="InterPro"/>
</dbReference>
<dbReference type="GO" id="GO:0016853">
    <property type="term" value="F:isomerase activity"/>
    <property type="evidence" value="ECO:0007669"/>
    <property type="project" value="UniProtKB-KW"/>
</dbReference>
<dbReference type="GO" id="GO:0051082">
    <property type="term" value="F:unfolded protein binding"/>
    <property type="evidence" value="ECO:0007669"/>
    <property type="project" value="UniProtKB-UniRule"/>
</dbReference>
<dbReference type="GO" id="GO:0042026">
    <property type="term" value="P:protein refolding"/>
    <property type="evidence" value="ECO:0007669"/>
    <property type="project" value="UniProtKB-UniRule"/>
</dbReference>
<dbReference type="CDD" id="cd03344">
    <property type="entry name" value="GroEL"/>
    <property type="match status" value="1"/>
</dbReference>
<dbReference type="FunFam" id="1.10.560.10:FF:000001">
    <property type="entry name" value="60 kDa chaperonin"/>
    <property type="match status" value="1"/>
</dbReference>
<dbReference type="FunFam" id="3.50.7.10:FF:000001">
    <property type="entry name" value="60 kDa chaperonin"/>
    <property type="match status" value="1"/>
</dbReference>
<dbReference type="Gene3D" id="3.50.7.10">
    <property type="entry name" value="GroEL"/>
    <property type="match status" value="1"/>
</dbReference>
<dbReference type="Gene3D" id="1.10.560.10">
    <property type="entry name" value="GroEL-like equatorial domain"/>
    <property type="match status" value="1"/>
</dbReference>
<dbReference type="Gene3D" id="3.30.260.10">
    <property type="entry name" value="TCP-1-like chaperonin intermediate domain"/>
    <property type="match status" value="1"/>
</dbReference>
<dbReference type="HAMAP" id="MF_00600">
    <property type="entry name" value="CH60"/>
    <property type="match status" value="1"/>
</dbReference>
<dbReference type="InterPro" id="IPR018370">
    <property type="entry name" value="Chaperonin_Cpn60_CS"/>
</dbReference>
<dbReference type="InterPro" id="IPR001844">
    <property type="entry name" value="Cpn60/GroEL"/>
</dbReference>
<dbReference type="InterPro" id="IPR002423">
    <property type="entry name" value="Cpn60/GroEL/TCP-1"/>
</dbReference>
<dbReference type="InterPro" id="IPR027409">
    <property type="entry name" value="GroEL-like_apical_dom_sf"/>
</dbReference>
<dbReference type="InterPro" id="IPR027413">
    <property type="entry name" value="GROEL-like_equatorial_sf"/>
</dbReference>
<dbReference type="InterPro" id="IPR027410">
    <property type="entry name" value="TCP-1-like_intermed_sf"/>
</dbReference>
<dbReference type="NCBIfam" id="TIGR02348">
    <property type="entry name" value="GroEL"/>
    <property type="match status" value="1"/>
</dbReference>
<dbReference type="NCBIfam" id="NF000592">
    <property type="entry name" value="PRK00013.1"/>
    <property type="match status" value="1"/>
</dbReference>
<dbReference type="NCBIfam" id="NF009487">
    <property type="entry name" value="PRK12849.1"/>
    <property type="match status" value="1"/>
</dbReference>
<dbReference type="NCBIfam" id="NF009488">
    <property type="entry name" value="PRK12850.1"/>
    <property type="match status" value="1"/>
</dbReference>
<dbReference type="NCBIfam" id="NF009489">
    <property type="entry name" value="PRK12851.1"/>
    <property type="match status" value="1"/>
</dbReference>
<dbReference type="PANTHER" id="PTHR45633">
    <property type="entry name" value="60 KDA HEAT SHOCK PROTEIN, MITOCHONDRIAL"/>
    <property type="match status" value="1"/>
</dbReference>
<dbReference type="Pfam" id="PF00118">
    <property type="entry name" value="Cpn60_TCP1"/>
    <property type="match status" value="1"/>
</dbReference>
<dbReference type="PRINTS" id="PR00298">
    <property type="entry name" value="CHAPERONIN60"/>
</dbReference>
<dbReference type="SUPFAM" id="SSF52029">
    <property type="entry name" value="GroEL apical domain-like"/>
    <property type="match status" value="1"/>
</dbReference>
<dbReference type="SUPFAM" id="SSF48592">
    <property type="entry name" value="GroEL equatorial domain-like"/>
    <property type="match status" value="1"/>
</dbReference>
<dbReference type="SUPFAM" id="SSF54849">
    <property type="entry name" value="GroEL-intermediate domain like"/>
    <property type="match status" value="1"/>
</dbReference>
<dbReference type="PROSITE" id="PS00296">
    <property type="entry name" value="CHAPERONINS_CPN60"/>
    <property type="match status" value="1"/>
</dbReference>